<reference key="1">
    <citation type="submission" date="1998-09" db="EMBL/GenBank/DDBJ databases">
        <title>Classification of sea snakes in genus Laticauda by nucleotide sequences encoding short chain neurotoxins.</title>
        <authorList>
            <person name="Kariya Y."/>
            <person name="Araki S."/>
            <person name="Agu H."/>
            <person name="Tamiya T."/>
            <person name="Tsuchiya T."/>
        </authorList>
    </citation>
    <scope>NUCLEOTIDE SEQUENCE [MRNA]</scope>
    <source>
        <tissue>Venom gland</tissue>
    </source>
</reference>
<reference key="2">
    <citation type="journal article" date="2003" name="Gene">
        <title>Molecular evolution and diversification of snake toxin genes, revealed by analysis of intron sequences.</title>
        <authorList>
            <person name="Fujimi T.J."/>
            <person name="Nakajyo T."/>
            <person name="Nishimura E."/>
            <person name="Ogura E."/>
            <person name="Tsuchiya T."/>
            <person name="Tamiya T."/>
        </authorList>
    </citation>
    <scope>NUCLEOTIDE SEQUENCE [GENOMIC DNA]</scope>
    <source>
        <tissue>Liver</tissue>
    </source>
</reference>
<accession>Q9YGC4</accession>
<accession>Q7T2I2</accession>
<evidence type="ECO:0000250" key="1"/>
<evidence type="ECO:0000250" key="2">
    <source>
        <dbReference type="UniProtKB" id="P0C1Z0"/>
    </source>
</evidence>
<evidence type="ECO:0000250" key="3">
    <source>
        <dbReference type="UniProtKB" id="P60775"/>
    </source>
</evidence>
<evidence type="ECO:0000305" key="4"/>
<dbReference type="EMBL" id="AB017964">
    <property type="protein sequence ID" value="BAA75784.1"/>
    <property type="molecule type" value="mRNA"/>
</dbReference>
<dbReference type="EMBL" id="AB017960">
    <property type="protein sequence ID" value="BAA75780.1"/>
    <property type="molecule type" value="mRNA"/>
</dbReference>
<dbReference type="EMBL" id="AB098534">
    <property type="protein sequence ID" value="BAC78206.1"/>
    <property type="molecule type" value="Genomic_DNA"/>
</dbReference>
<dbReference type="SMR" id="Q9YGC4"/>
<dbReference type="Proteomes" id="UP000694406">
    <property type="component" value="Unplaced"/>
</dbReference>
<dbReference type="GO" id="GO:0005576">
    <property type="term" value="C:extracellular region"/>
    <property type="evidence" value="ECO:0007669"/>
    <property type="project" value="UniProtKB-SubCell"/>
</dbReference>
<dbReference type="GO" id="GO:0030550">
    <property type="term" value="F:acetylcholine receptor inhibitor activity"/>
    <property type="evidence" value="ECO:0007669"/>
    <property type="project" value="UniProtKB-KW"/>
</dbReference>
<dbReference type="GO" id="GO:0099106">
    <property type="term" value="F:ion channel regulator activity"/>
    <property type="evidence" value="ECO:0007669"/>
    <property type="project" value="UniProtKB-KW"/>
</dbReference>
<dbReference type="GO" id="GO:0090729">
    <property type="term" value="F:toxin activity"/>
    <property type="evidence" value="ECO:0007669"/>
    <property type="project" value="UniProtKB-KW"/>
</dbReference>
<dbReference type="CDD" id="cd00206">
    <property type="entry name" value="TFP_snake_toxin"/>
    <property type="match status" value="1"/>
</dbReference>
<dbReference type="FunFam" id="2.10.60.10:FF:000024">
    <property type="entry name" value="Cytotoxin 1"/>
    <property type="match status" value="1"/>
</dbReference>
<dbReference type="Gene3D" id="2.10.60.10">
    <property type="entry name" value="CD59"/>
    <property type="match status" value="1"/>
</dbReference>
<dbReference type="InterPro" id="IPR003571">
    <property type="entry name" value="Snake_3FTx"/>
</dbReference>
<dbReference type="InterPro" id="IPR045860">
    <property type="entry name" value="Snake_toxin-like_sf"/>
</dbReference>
<dbReference type="InterPro" id="IPR018354">
    <property type="entry name" value="Snake_toxin_con_site"/>
</dbReference>
<dbReference type="InterPro" id="IPR054131">
    <property type="entry name" value="Toxin_cobra-type"/>
</dbReference>
<dbReference type="Pfam" id="PF21947">
    <property type="entry name" value="Toxin_cobra-type"/>
    <property type="match status" value="1"/>
</dbReference>
<dbReference type="SUPFAM" id="SSF57302">
    <property type="entry name" value="Snake toxin-like"/>
    <property type="match status" value="1"/>
</dbReference>
<dbReference type="PROSITE" id="PS00272">
    <property type="entry name" value="SNAKE_TOXIN"/>
    <property type="match status" value="1"/>
</dbReference>
<keyword id="KW-0008">Acetylcholine receptor inhibiting toxin</keyword>
<keyword id="KW-1015">Disulfide bond</keyword>
<keyword id="KW-0872">Ion channel impairing toxin</keyword>
<keyword id="KW-0528">Neurotoxin</keyword>
<keyword id="KW-0629">Postsynaptic neurotoxin</keyword>
<keyword id="KW-1185">Reference proteome</keyword>
<keyword id="KW-0964">Secreted</keyword>
<keyword id="KW-0732">Signal</keyword>
<keyword id="KW-0800">Toxin</keyword>
<comment type="function">
    <text evidence="3">Binds to muscle nicotinic acetylcholine receptor (nAChR) and inhibit acetylcholine from binding to the receptor, thereby impairing neuromuscular transmission.</text>
</comment>
<comment type="subcellular location">
    <subcellularLocation>
        <location evidence="1">Secreted</location>
    </subcellularLocation>
</comment>
<comment type="tissue specificity">
    <text evidence="4">Expressed by the venom gland.</text>
</comment>
<comment type="similarity">
    <text evidence="4">Belongs to the three-finger toxin family. Short-chain subfamily. Type I alpha-neurotoxin sub-subfamily.</text>
</comment>
<feature type="signal peptide" evidence="1">
    <location>
        <begin position="1"/>
        <end position="21"/>
    </location>
</feature>
<feature type="chain" id="PRO_0000035444" description="Short neurotoxin OKI-01/OKI-19">
    <location>
        <begin position="22"/>
        <end position="83"/>
    </location>
</feature>
<feature type="disulfide bond" evidence="2">
    <location>
        <begin position="24"/>
        <end position="45"/>
    </location>
</feature>
<feature type="disulfide bond" evidence="2">
    <location>
        <begin position="38"/>
        <end position="62"/>
    </location>
</feature>
<feature type="disulfide bond" evidence="2">
    <location>
        <begin position="64"/>
        <end position="75"/>
    </location>
</feature>
<feature type="disulfide bond" evidence="2">
    <location>
        <begin position="76"/>
        <end position="81"/>
    </location>
</feature>
<proteinExistence type="inferred from homology"/>
<sequence length="83" mass="9261">MKTLLLTLVVVTIVCLDLGYTRRCFNHPSSQPQTNKSCPPGENSCYNKQWRDHRGTITERGCGCPTVKPGIKLTCCQSEDCNN</sequence>
<protein>
    <recommendedName>
        <fullName>Short neurotoxin OKI-01/OKI-19</fullName>
    </recommendedName>
</protein>
<name>3S13_LATLA</name>
<organism>
    <name type="scientific">Laticauda laticaudata</name>
    <name type="common">Blue-ringed sea krait</name>
    <name type="synonym">Blue-lipped sea krait</name>
    <dbReference type="NCBI Taxonomy" id="8630"/>
    <lineage>
        <taxon>Eukaryota</taxon>
        <taxon>Metazoa</taxon>
        <taxon>Chordata</taxon>
        <taxon>Craniata</taxon>
        <taxon>Vertebrata</taxon>
        <taxon>Euteleostomi</taxon>
        <taxon>Lepidosauria</taxon>
        <taxon>Squamata</taxon>
        <taxon>Bifurcata</taxon>
        <taxon>Unidentata</taxon>
        <taxon>Episquamata</taxon>
        <taxon>Toxicofera</taxon>
        <taxon>Serpentes</taxon>
        <taxon>Colubroidea</taxon>
        <taxon>Elapidae</taxon>
        <taxon>Laticaudinae</taxon>
        <taxon>Laticauda</taxon>
    </lineage>
</organism>